<proteinExistence type="inferred from homology"/>
<organism>
    <name type="scientific">Shewanella sp. (strain ANA-3)</name>
    <dbReference type="NCBI Taxonomy" id="94122"/>
    <lineage>
        <taxon>Bacteria</taxon>
        <taxon>Pseudomonadati</taxon>
        <taxon>Pseudomonadota</taxon>
        <taxon>Gammaproteobacteria</taxon>
        <taxon>Alteromonadales</taxon>
        <taxon>Shewanellaceae</taxon>
        <taxon>Shewanella</taxon>
    </lineage>
</organism>
<name>QUEA_SHESA</name>
<reference key="1">
    <citation type="submission" date="2006-09" db="EMBL/GenBank/DDBJ databases">
        <title>Complete sequence of chromosome 1 of Shewanella sp. ANA-3.</title>
        <authorList>
            <person name="Copeland A."/>
            <person name="Lucas S."/>
            <person name="Lapidus A."/>
            <person name="Barry K."/>
            <person name="Detter J.C."/>
            <person name="Glavina del Rio T."/>
            <person name="Hammon N."/>
            <person name="Israni S."/>
            <person name="Dalin E."/>
            <person name="Tice H."/>
            <person name="Pitluck S."/>
            <person name="Chertkov O."/>
            <person name="Brettin T."/>
            <person name="Bruce D."/>
            <person name="Han C."/>
            <person name="Tapia R."/>
            <person name="Gilna P."/>
            <person name="Schmutz J."/>
            <person name="Larimer F."/>
            <person name="Land M."/>
            <person name="Hauser L."/>
            <person name="Kyrpides N."/>
            <person name="Kim E."/>
            <person name="Newman D."/>
            <person name="Salticov C."/>
            <person name="Konstantinidis K."/>
            <person name="Klappenback J."/>
            <person name="Tiedje J."/>
            <person name="Richardson P."/>
        </authorList>
    </citation>
    <scope>NUCLEOTIDE SEQUENCE [LARGE SCALE GENOMIC DNA]</scope>
    <source>
        <strain>ANA-3</strain>
    </source>
</reference>
<accession>A0KV49</accession>
<keyword id="KW-0963">Cytoplasm</keyword>
<keyword id="KW-0671">Queuosine biosynthesis</keyword>
<keyword id="KW-0949">S-adenosyl-L-methionine</keyword>
<keyword id="KW-0808">Transferase</keyword>
<comment type="function">
    <text evidence="1">Transfers and isomerizes the ribose moiety from AdoMet to the 7-aminomethyl group of 7-deazaguanine (preQ1-tRNA) to give epoxyqueuosine (oQ-tRNA).</text>
</comment>
<comment type="catalytic activity">
    <reaction evidence="1">
        <text>7-aminomethyl-7-carbaguanosine(34) in tRNA + S-adenosyl-L-methionine = epoxyqueuosine(34) in tRNA + adenine + L-methionine + 2 H(+)</text>
        <dbReference type="Rhea" id="RHEA:32155"/>
        <dbReference type="Rhea" id="RHEA-COMP:10342"/>
        <dbReference type="Rhea" id="RHEA-COMP:18582"/>
        <dbReference type="ChEBI" id="CHEBI:15378"/>
        <dbReference type="ChEBI" id="CHEBI:16708"/>
        <dbReference type="ChEBI" id="CHEBI:57844"/>
        <dbReference type="ChEBI" id="CHEBI:59789"/>
        <dbReference type="ChEBI" id="CHEBI:82833"/>
        <dbReference type="ChEBI" id="CHEBI:194443"/>
        <dbReference type="EC" id="2.4.99.17"/>
    </reaction>
</comment>
<comment type="pathway">
    <text evidence="1">tRNA modification; tRNA-queuosine biosynthesis.</text>
</comment>
<comment type="subunit">
    <text evidence="1">Monomer.</text>
</comment>
<comment type="subcellular location">
    <subcellularLocation>
        <location evidence="1">Cytoplasm</location>
    </subcellularLocation>
</comment>
<comment type="similarity">
    <text evidence="1">Belongs to the QueA family.</text>
</comment>
<gene>
    <name evidence="1" type="primary">queA</name>
    <name type="ordered locus">Shewana3_1434</name>
</gene>
<feature type="chain" id="PRO_1000015274" description="S-adenosylmethionine:tRNA ribosyltransferase-isomerase">
    <location>
        <begin position="1"/>
        <end position="345"/>
    </location>
</feature>
<sequence length="345" mass="38171">MRVTDFSFDLPDELIARYPMAQRNASRLLTLDGNTGTLADKQFTDLLGMINPGDLMVFNNTRVIPARLFGQKASGGKLEILVERMLDDKRILAHVRSSKSPKVDSIIHLDGGYEMKMAARYDALFELELLSDLTILEVLEAVGHMPLPPYIDRPDEDADKERYQTVYNQNPGAVAAPTAGLHFDDAMLDALKAKGVNIAFVTLHVGAGTFQPVRVDNVLEHKMHSEWANVPQDVVDLIAQTKAAGKRVVAVGTTSVRSLESAARASEGELKAFSGDTDIFIYPGYQFQIVDAMITNFHLPESTLIMLVSAFAGFDHVMAAYQHAITQKYRFFSYGDAMFVTKKAH</sequence>
<protein>
    <recommendedName>
        <fullName evidence="1">S-adenosylmethionine:tRNA ribosyltransferase-isomerase</fullName>
        <ecNumber evidence="1">2.4.99.17</ecNumber>
    </recommendedName>
    <alternativeName>
        <fullName evidence="1">Queuosine biosynthesis protein QueA</fullName>
    </alternativeName>
</protein>
<dbReference type="EC" id="2.4.99.17" evidence="1"/>
<dbReference type="EMBL" id="CP000469">
    <property type="protein sequence ID" value="ABK47668.1"/>
    <property type="molecule type" value="Genomic_DNA"/>
</dbReference>
<dbReference type="RefSeq" id="WP_011716499.1">
    <property type="nucleotide sequence ID" value="NC_008577.1"/>
</dbReference>
<dbReference type="SMR" id="A0KV49"/>
<dbReference type="STRING" id="94122.Shewana3_1434"/>
<dbReference type="KEGG" id="shn:Shewana3_1434"/>
<dbReference type="eggNOG" id="COG0809">
    <property type="taxonomic scope" value="Bacteria"/>
</dbReference>
<dbReference type="HOGENOM" id="CLU_039110_1_0_6"/>
<dbReference type="OrthoDB" id="9805933at2"/>
<dbReference type="UniPathway" id="UPA00392"/>
<dbReference type="Proteomes" id="UP000002589">
    <property type="component" value="Chromosome"/>
</dbReference>
<dbReference type="GO" id="GO:0005737">
    <property type="term" value="C:cytoplasm"/>
    <property type="evidence" value="ECO:0007669"/>
    <property type="project" value="UniProtKB-SubCell"/>
</dbReference>
<dbReference type="GO" id="GO:0051075">
    <property type="term" value="F:S-adenosylmethionine:tRNA ribosyltransferase-isomerase activity"/>
    <property type="evidence" value="ECO:0007669"/>
    <property type="project" value="UniProtKB-EC"/>
</dbReference>
<dbReference type="GO" id="GO:0008616">
    <property type="term" value="P:queuosine biosynthetic process"/>
    <property type="evidence" value="ECO:0007669"/>
    <property type="project" value="UniProtKB-UniRule"/>
</dbReference>
<dbReference type="GO" id="GO:0002099">
    <property type="term" value="P:tRNA wobble guanine modification"/>
    <property type="evidence" value="ECO:0007669"/>
    <property type="project" value="TreeGrafter"/>
</dbReference>
<dbReference type="FunFam" id="2.40.10.240:FF:000001">
    <property type="entry name" value="S-adenosylmethionine:tRNA ribosyltransferase-isomerase"/>
    <property type="match status" value="1"/>
</dbReference>
<dbReference type="FunFam" id="3.40.1780.10:FF:000001">
    <property type="entry name" value="S-adenosylmethionine:tRNA ribosyltransferase-isomerase"/>
    <property type="match status" value="1"/>
</dbReference>
<dbReference type="Gene3D" id="2.40.10.240">
    <property type="entry name" value="QueA-like"/>
    <property type="match status" value="1"/>
</dbReference>
<dbReference type="Gene3D" id="3.40.1780.10">
    <property type="entry name" value="QueA-like"/>
    <property type="match status" value="1"/>
</dbReference>
<dbReference type="HAMAP" id="MF_00113">
    <property type="entry name" value="QueA"/>
    <property type="match status" value="1"/>
</dbReference>
<dbReference type="InterPro" id="IPR003699">
    <property type="entry name" value="QueA"/>
</dbReference>
<dbReference type="InterPro" id="IPR042118">
    <property type="entry name" value="QueA_dom1"/>
</dbReference>
<dbReference type="InterPro" id="IPR042119">
    <property type="entry name" value="QueA_dom2"/>
</dbReference>
<dbReference type="InterPro" id="IPR036100">
    <property type="entry name" value="QueA_sf"/>
</dbReference>
<dbReference type="NCBIfam" id="NF001140">
    <property type="entry name" value="PRK00147.1"/>
    <property type="match status" value="1"/>
</dbReference>
<dbReference type="NCBIfam" id="TIGR00113">
    <property type="entry name" value="queA"/>
    <property type="match status" value="1"/>
</dbReference>
<dbReference type="PANTHER" id="PTHR30307">
    <property type="entry name" value="S-ADENOSYLMETHIONINE:TRNA RIBOSYLTRANSFERASE-ISOMERASE"/>
    <property type="match status" value="1"/>
</dbReference>
<dbReference type="PANTHER" id="PTHR30307:SF0">
    <property type="entry name" value="S-ADENOSYLMETHIONINE:TRNA RIBOSYLTRANSFERASE-ISOMERASE"/>
    <property type="match status" value="1"/>
</dbReference>
<dbReference type="Pfam" id="PF02547">
    <property type="entry name" value="Queuosine_synth"/>
    <property type="match status" value="1"/>
</dbReference>
<dbReference type="SUPFAM" id="SSF111337">
    <property type="entry name" value="QueA-like"/>
    <property type="match status" value="1"/>
</dbReference>
<evidence type="ECO:0000255" key="1">
    <source>
        <dbReference type="HAMAP-Rule" id="MF_00113"/>
    </source>
</evidence>